<accession>Q5X1A9</accession>
<keyword id="KW-0997">Cell inner membrane</keyword>
<keyword id="KW-1003">Cell membrane</keyword>
<keyword id="KW-0472">Membrane</keyword>
<keyword id="KW-0520">NAD</keyword>
<keyword id="KW-0874">Quinone</keyword>
<keyword id="KW-1278">Translocase</keyword>
<keyword id="KW-0813">Transport</keyword>
<keyword id="KW-0830">Ubiquinone</keyword>
<reference key="1">
    <citation type="journal article" date="2004" name="Nat. Genet.">
        <title>Evidence in the Legionella pneumophila genome for exploitation of host cell functions and high genome plasticity.</title>
        <authorList>
            <person name="Cazalet C."/>
            <person name="Rusniok C."/>
            <person name="Brueggemann H."/>
            <person name="Zidane N."/>
            <person name="Magnier A."/>
            <person name="Ma L."/>
            <person name="Tichit M."/>
            <person name="Jarraud S."/>
            <person name="Bouchier C."/>
            <person name="Vandenesch F."/>
            <person name="Kunst F."/>
            <person name="Etienne J."/>
            <person name="Glaser P."/>
            <person name="Buchrieser C."/>
        </authorList>
    </citation>
    <scope>NUCLEOTIDE SEQUENCE [LARGE SCALE GENOMIC DNA]</scope>
    <source>
        <strain>Paris</strain>
    </source>
</reference>
<organism>
    <name type="scientific">Legionella pneumophila (strain Paris)</name>
    <dbReference type="NCBI Taxonomy" id="297246"/>
    <lineage>
        <taxon>Bacteria</taxon>
        <taxon>Pseudomonadati</taxon>
        <taxon>Pseudomonadota</taxon>
        <taxon>Gammaproteobacteria</taxon>
        <taxon>Legionellales</taxon>
        <taxon>Legionellaceae</taxon>
        <taxon>Legionella</taxon>
    </lineage>
</organism>
<sequence>MTKNEYLIEKLQANLANHITELTSAYGEVTIECEVHNLLPVMIELRDREEFSFDQLIDLCGVDYLHYGDYDWETESATEHGFSRGVERQEAKAYAVNKPRFAVVYHLLSTKKNHRLRVKLFVEESHLIVPSVHHLWKSANWFEREAYDLYGILFDGHPDLRRLLTDYGFIGHPFRKDFPLSGEVEMRYDAKLQKVIYAPVDIVPRIVVPKVIRNDNRYIGNEGSKND</sequence>
<name>NUOC_LEGPA</name>
<gene>
    <name evidence="1" type="primary">nuoC</name>
    <name type="ordered locus">lpp2834</name>
</gene>
<evidence type="ECO:0000255" key="1">
    <source>
        <dbReference type="HAMAP-Rule" id="MF_01357"/>
    </source>
</evidence>
<protein>
    <recommendedName>
        <fullName evidence="1">NADH-quinone oxidoreductase subunit C</fullName>
        <ecNumber evidence="1">7.1.1.-</ecNumber>
    </recommendedName>
    <alternativeName>
        <fullName evidence="1">NADH dehydrogenase I subunit C</fullName>
    </alternativeName>
    <alternativeName>
        <fullName evidence="1">NDH-1 subunit C</fullName>
    </alternativeName>
</protein>
<feature type="chain" id="PRO_0000358117" description="NADH-quinone oxidoreductase subunit C">
    <location>
        <begin position="1"/>
        <end position="227"/>
    </location>
</feature>
<proteinExistence type="inferred from homology"/>
<comment type="function">
    <text evidence="1">NDH-1 shuttles electrons from NADH, via FMN and iron-sulfur (Fe-S) centers, to quinones in the respiratory chain. The immediate electron acceptor for the enzyme in this species is believed to be ubiquinone. Couples the redox reaction to proton translocation (for every two electrons transferred, four hydrogen ions are translocated across the cytoplasmic membrane), and thus conserves the redox energy in a proton gradient.</text>
</comment>
<comment type="catalytic activity">
    <reaction evidence="1">
        <text>a quinone + NADH + 5 H(+)(in) = a quinol + NAD(+) + 4 H(+)(out)</text>
        <dbReference type="Rhea" id="RHEA:57888"/>
        <dbReference type="ChEBI" id="CHEBI:15378"/>
        <dbReference type="ChEBI" id="CHEBI:24646"/>
        <dbReference type="ChEBI" id="CHEBI:57540"/>
        <dbReference type="ChEBI" id="CHEBI:57945"/>
        <dbReference type="ChEBI" id="CHEBI:132124"/>
    </reaction>
</comment>
<comment type="subunit">
    <text evidence="1">NDH-1 is composed of 14 different subunits. Subunits NuoB, C, D, E, F, and G constitute the peripheral sector of the complex.</text>
</comment>
<comment type="subcellular location">
    <subcellularLocation>
        <location evidence="1">Cell inner membrane</location>
        <topology evidence="1">Peripheral membrane protein</topology>
        <orientation evidence="1">Cytoplasmic side</orientation>
    </subcellularLocation>
</comment>
<comment type="similarity">
    <text evidence="1">Belongs to the complex I 30 kDa subunit family.</text>
</comment>
<dbReference type="EC" id="7.1.1.-" evidence="1"/>
<dbReference type="EMBL" id="CR628336">
    <property type="protein sequence ID" value="CAH13987.1"/>
    <property type="molecule type" value="Genomic_DNA"/>
</dbReference>
<dbReference type="RefSeq" id="WP_014844844.1">
    <property type="nucleotide sequence ID" value="NC_006368.1"/>
</dbReference>
<dbReference type="SMR" id="Q5X1A9"/>
<dbReference type="KEGG" id="lpp:lpp2834"/>
<dbReference type="LegioList" id="lpp2834"/>
<dbReference type="HOGENOM" id="CLU_042628_2_1_6"/>
<dbReference type="GO" id="GO:0005886">
    <property type="term" value="C:plasma membrane"/>
    <property type="evidence" value="ECO:0007669"/>
    <property type="project" value="UniProtKB-SubCell"/>
</dbReference>
<dbReference type="GO" id="GO:0008137">
    <property type="term" value="F:NADH dehydrogenase (ubiquinone) activity"/>
    <property type="evidence" value="ECO:0007669"/>
    <property type="project" value="InterPro"/>
</dbReference>
<dbReference type="GO" id="GO:0050136">
    <property type="term" value="F:NADH:ubiquinone reductase (non-electrogenic) activity"/>
    <property type="evidence" value="ECO:0007669"/>
    <property type="project" value="UniProtKB-UniRule"/>
</dbReference>
<dbReference type="GO" id="GO:0048038">
    <property type="term" value="F:quinone binding"/>
    <property type="evidence" value="ECO:0007669"/>
    <property type="project" value="UniProtKB-KW"/>
</dbReference>
<dbReference type="Gene3D" id="3.30.460.80">
    <property type="entry name" value="NADH:ubiquinone oxidoreductase, 30kDa subunit"/>
    <property type="match status" value="1"/>
</dbReference>
<dbReference type="HAMAP" id="MF_01357">
    <property type="entry name" value="NDH1_NuoC"/>
    <property type="match status" value="1"/>
</dbReference>
<dbReference type="InterPro" id="IPR010218">
    <property type="entry name" value="NADH_DH_suC"/>
</dbReference>
<dbReference type="InterPro" id="IPR037232">
    <property type="entry name" value="NADH_quin_OxRdtase_su_C/D-like"/>
</dbReference>
<dbReference type="InterPro" id="IPR001268">
    <property type="entry name" value="NADH_UbQ_OxRdtase_30kDa_su"/>
</dbReference>
<dbReference type="InterPro" id="IPR020396">
    <property type="entry name" value="NADH_UbQ_OxRdtase_CS"/>
</dbReference>
<dbReference type="NCBIfam" id="TIGR01961">
    <property type="entry name" value="NuoC_fam"/>
    <property type="match status" value="1"/>
</dbReference>
<dbReference type="NCBIfam" id="NF004730">
    <property type="entry name" value="PRK06074.1-1"/>
    <property type="match status" value="1"/>
</dbReference>
<dbReference type="PANTHER" id="PTHR10884:SF14">
    <property type="entry name" value="NADH DEHYDROGENASE [UBIQUINONE] IRON-SULFUR PROTEIN 3, MITOCHONDRIAL"/>
    <property type="match status" value="1"/>
</dbReference>
<dbReference type="PANTHER" id="PTHR10884">
    <property type="entry name" value="NADH DEHYDROGENASE UBIQUINONE IRON-SULFUR PROTEIN 3"/>
    <property type="match status" value="1"/>
</dbReference>
<dbReference type="Pfam" id="PF00329">
    <property type="entry name" value="Complex1_30kDa"/>
    <property type="match status" value="1"/>
</dbReference>
<dbReference type="SUPFAM" id="SSF143243">
    <property type="entry name" value="Nqo5-like"/>
    <property type="match status" value="1"/>
</dbReference>
<dbReference type="PROSITE" id="PS00542">
    <property type="entry name" value="COMPLEX1_30K"/>
    <property type="match status" value="1"/>
</dbReference>